<sequence length="85" mass="9371">MKVTLIAILTCAAVLALHTTAAEELEAESQLMEVGMPDTELAAVDEERLFECSVSCEIEKEGNKDCKKKKCKGGWECKFNMCVKV</sequence>
<accession>D2Y214</accession>
<protein>
    <recommendedName>
        <fullName>U4-theraphotoxin-Hhn1w</fullName>
        <shortName>U4-TRTX-Hhn1w</shortName>
    </recommendedName>
    <alternativeName>
        <fullName>Hainantoxin-II-3</fullName>
        <shortName>HNTX-II-3</shortName>
    </alternativeName>
</protein>
<dbReference type="EMBL" id="GU292891">
    <property type="protein sequence ID" value="ADB56707.1"/>
    <property type="molecule type" value="mRNA"/>
</dbReference>
<dbReference type="SMR" id="D2Y214"/>
<dbReference type="ArachnoServer" id="AS001883">
    <property type="toxin name" value="U4-theraphotoxin-Hhn1w"/>
</dbReference>
<dbReference type="GO" id="GO:0005576">
    <property type="term" value="C:extracellular region"/>
    <property type="evidence" value="ECO:0007669"/>
    <property type="project" value="UniProtKB-SubCell"/>
</dbReference>
<dbReference type="GO" id="GO:0035792">
    <property type="term" value="C:host cell postsynaptic membrane"/>
    <property type="evidence" value="ECO:0007669"/>
    <property type="project" value="UniProtKB-KW"/>
</dbReference>
<dbReference type="GO" id="GO:0090729">
    <property type="term" value="F:toxin activity"/>
    <property type="evidence" value="ECO:0007669"/>
    <property type="project" value="UniProtKB-KW"/>
</dbReference>
<dbReference type="InterPro" id="IPR012625">
    <property type="entry name" value="Hwtx-2-like"/>
</dbReference>
<dbReference type="Pfam" id="PF08089">
    <property type="entry name" value="Toxin_20"/>
    <property type="match status" value="1"/>
</dbReference>
<dbReference type="SUPFAM" id="SSF57059">
    <property type="entry name" value="omega toxin-like"/>
    <property type="match status" value="1"/>
</dbReference>
<dbReference type="PROSITE" id="PS60022">
    <property type="entry name" value="HWTX_2"/>
    <property type="match status" value="1"/>
</dbReference>
<feature type="signal peptide" evidence="2">
    <location>
        <begin position="1"/>
        <end position="22"/>
    </location>
</feature>
<feature type="propeptide" id="PRO_0000400769" evidence="1">
    <location>
        <begin position="23"/>
        <end position="48"/>
    </location>
</feature>
<feature type="peptide" id="PRO_0000400770" description="U4-theraphotoxin-Hhn1w">
    <location>
        <begin position="49"/>
        <end position="85"/>
    </location>
</feature>
<feature type="disulfide bond" evidence="1">
    <location>
        <begin position="52"/>
        <end position="66"/>
    </location>
</feature>
<feature type="disulfide bond" evidence="1">
    <location>
        <begin position="56"/>
        <end position="77"/>
    </location>
</feature>
<feature type="disulfide bond" evidence="1">
    <location>
        <begin position="71"/>
        <end position="82"/>
    </location>
</feature>
<comment type="function">
    <text evidence="1">Postsynaptic neurotoxin.</text>
</comment>
<comment type="subcellular location">
    <subcellularLocation>
        <location evidence="1">Secreted</location>
    </subcellularLocation>
</comment>
<comment type="tissue specificity">
    <text>Expressed by the venom gland.</text>
</comment>
<comment type="similarity">
    <text evidence="3">Belongs to the neurotoxin 12 (Hwtx-2) family. 02 (Hwtx-2) subfamily.</text>
</comment>
<proteinExistence type="evidence at transcript level"/>
<reference key="1">
    <citation type="journal article" date="2010" name="J. Proteome Res.">
        <title>Molecular diversification of peptide toxins from the tarantula Haplopelma hainanum (Ornithoctonus hainana) venom based on transcriptomic, peptidomic, and genomic analyses.</title>
        <authorList>
            <person name="Tang X."/>
            <person name="Zhang Y."/>
            <person name="Hu W."/>
            <person name="Xu D."/>
            <person name="Tao H."/>
            <person name="Yang X."/>
            <person name="Li Y."/>
            <person name="Jiang L."/>
            <person name="Liang S."/>
        </authorList>
    </citation>
    <scope>NUCLEOTIDE SEQUENCE [LARGE SCALE MRNA]</scope>
    <source>
        <tissue>Venom gland</tissue>
    </source>
</reference>
<keyword id="KW-1015">Disulfide bond</keyword>
<keyword id="KW-0528">Neurotoxin</keyword>
<keyword id="KW-0629">Postsynaptic neurotoxin</keyword>
<keyword id="KW-0964">Secreted</keyword>
<keyword id="KW-0732">Signal</keyword>
<keyword id="KW-0800">Toxin</keyword>
<name>H2C01_CYRHA</name>
<evidence type="ECO:0000250" key="1"/>
<evidence type="ECO:0000255" key="2"/>
<evidence type="ECO:0000305" key="3"/>
<organism>
    <name type="scientific">Cyriopagopus hainanus</name>
    <name type="common">Chinese bird spider</name>
    <name type="synonym">Haplopelma hainanum</name>
    <dbReference type="NCBI Taxonomy" id="209901"/>
    <lineage>
        <taxon>Eukaryota</taxon>
        <taxon>Metazoa</taxon>
        <taxon>Ecdysozoa</taxon>
        <taxon>Arthropoda</taxon>
        <taxon>Chelicerata</taxon>
        <taxon>Arachnida</taxon>
        <taxon>Araneae</taxon>
        <taxon>Mygalomorphae</taxon>
        <taxon>Theraphosidae</taxon>
        <taxon>Haplopelma</taxon>
    </lineage>
</organism>